<proteinExistence type="inferred from homology"/>
<sequence length="228" mass="25725">MGQKVHPTGIRLGIVKEHTSVWYADGATYADYLLKDLKTREYLQDKLKSASVSRIDIHRPAQTARITIHTARPGIVIGKKGEDVEKLRQDLTKQMGVPVHINIEEIRKPELDAMLVAQSVAQQLERRVMFRRAMKRAVQNAMRIGAKGIKIQVSGRLGGAEIARTEWYREGRVPLHTLRADIDYNTYEAHTTYGVIGVKVWIFKGEVIGGRQEELKPQAPAPRKKAAK</sequence>
<name>RS3_PSEPK</name>
<gene>
    <name evidence="1" type="primary">rpsC</name>
    <name type="ordered locus">PP_0460</name>
</gene>
<keyword id="KW-1185">Reference proteome</keyword>
<keyword id="KW-0687">Ribonucleoprotein</keyword>
<keyword id="KW-0689">Ribosomal protein</keyword>
<keyword id="KW-0694">RNA-binding</keyword>
<keyword id="KW-0699">rRNA-binding</keyword>
<reference key="1">
    <citation type="journal article" date="2002" name="Environ. Microbiol.">
        <title>Complete genome sequence and comparative analysis of the metabolically versatile Pseudomonas putida KT2440.</title>
        <authorList>
            <person name="Nelson K.E."/>
            <person name="Weinel C."/>
            <person name="Paulsen I.T."/>
            <person name="Dodson R.J."/>
            <person name="Hilbert H."/>
            <person name="Martins dos Santos V.A.P."/>
            <person name="Fouts D.E."/>
            <person name="Gill S.R."/>
            <person name="Pop M."/>
            <person name="Holmes M."/>
            <person name="Brinkac L.M."/>
            <person name="Beanan M.J."/>
            <person name="DeBoy R.T."/>
            <person name="Daugherty S.C."/>
            <person name="Kolonay J.F."/>
            <person name="Madupu R."/>
            <person name="Nelson W.C."/>
            <person name="White O."/>
            <person name="Peterson J.D."/>
            <person name="Khouri H.M."/>
            <person name="Hance I."/>
            <person name="Chris Lee P."/>
            <person name="Holtzapple E.K."/>
            <person name="Scanlan D."/>
            <person name="Tran K."/>
            <person name="Moazzez A."/>
            <person name="Utterback T.R."/>
            <person name="Rizzo M."/>
            <person name="Lee K."/>
            <person name="Kosack D."/>
            <person name="Moestl D."/>
            <person name="Wedler H."/>
            <person name="Lauber J."/>
            <person name="Stjepandic D."/>
            <person name="Hoheisel J."/>
            <person name="Straetz M."/>
            <person name="Heim S."/>
            <person name="Kiewitz C."/>
            <person name="Eisen J.A."/>
            <person name="Timmis K.N."/>
            <person name="Duesterhoeft A."/>
            <person name="Tuemmler B."/>
            <person name="Fraser C.M."/>
        </authorList>
    </citation>
    <scope>NUCLEOTIDE SEQUENCE [LARGE SCALE GENOMIC DNA]</scope>
    <source>
        <strain>ATCC 47054 / DSM 6125 / CFBP 8728 / NCIMB 11950 / KT2440</strain>
    </source>
</reference>
<feature type="chain" id="PRO_0000130179" description="Small ribosomal subunit protein uS3">
    <location>
        <begin position="1"/>
        <end position="228"/>
    </location>
</feature>
<feature type="domain" description="KH type-2" evidence="1">
    <location>
        <begin position="39"/>
        <end position="107"/>
    </location>
</feature>
<protein>
    <recommendedName>
        <fullName evidence="1">Small ribosomal subunit protein uS3</fullName>
    </recommendedName>
    <alternativeName>
        <fullName evidence="2">30S ribosomal protein S3</fullName>
    </alternativeName>
</protein>
<dbReference type="EMBL" id="AE015451">
    <property type="protein sequence ID" value="AAN66090.1"/>
    <property type="status" value="ALT_INIT"/>
    <property type="molecule type" value="Genomic_DNA"/>
</dbReference>
<dbReference type="RefSeq" id="NP_742626.3">
    <property type="nucleotide sequence ID" value="NC_002947.4"/>
</dbReference>
<dbReference type="RefSeq" id="WP_003255481.1">
    <property type="nucleotide sequence ID" value="NZ_CP169744.1"/>
</dbReference>
<dbReference type="SMR" id="Q88QM9"/>
<dbReference type="STRING" id="160488.PP_0460"/>
<dbReference type="PaxDb" id="160488-PP_0460"/>
<dbReference type="GeneID" id="97165985"/>
<dbReference type="KEGG" id="ppu:PP_0460"/>
<dbReference type="PATRIC" id="fig|160488.4.peg.492"/>
<dbReference type="eggNOG" id="COG0092">
    <property type="taxonomic scope" value="Bacteria"/>
</dbReference>
<dbReference type="HOGENOM" id="CLU_058591_0_2_6"/>
<dbReference type="OrthoDB" id="9806396at2"/>
<dbReference type="PhylomeDB" id="Q88QM9"/>
<dbReference type="Proteomes" id="UP000000556">
    <property type="component" value="Chromosome"/>
</dbReference>
<dbReference type="GO" id="GO:0022627">
    <property type="term" value="C:cytosolic small ribosomal subunit"/>
    <property type="evidence" value="ECO:0007669"/>
    <property type="project" value="TreeGrafter"/>
</dbReference>
<dbReference type="GO" id="GO:0003729">
    <property type="term" value="F:mRNA binding"/>
    <property type="evidence" value="ECO:0007669"/>
    <property type="project" value="UniProtKB-UniRule"/>
</dbReference>
<dbReference type="GO" id="GO:0019843">
    <property type="term" value="F:rRNA binding"/>
    <property type="evidence" value="ECO:0007669"/>
    <property type="project" value="UniProtKB-UniRule"/>
</dbReference>
<dbReference type="GO" id="GO:0003735">
    <property type="term" value="F:structural constituent of ribosome"/>
    <property type="evidence" value="ECO:0007669"/>
    <property type="project" value="InterPro"/>
</dbReference>
<dbReference type="GO" id="GO:0006412">
    <property type="term" value="P:translation"/>
    <property type="evidence" value="ECO:0007669"/>
    <property type="project" value="UniProtKB-UniRule"/>
</dbReference>
<dbReference type="CDD" id="cd02412">
    <property type="entry name" value="KH-II_30S_S3"/>
    <property type="match status" value="1"/>
</dbReference>
<dbReference type="FunFam" id="3.30.1140.32:FF:000001">
    <property type="entry name" value="30S ribosomal protein S3"/>
    <property type="match status" value="1"/>
</dbReference>
<dbReference type="FunFam" id="3.30.300.20:FF:000001">
    <property type="entry name" value="30S ribosomal protein S3"/>
    <property type="match status" value="1"/>
</dbReference>
<dbReference type="Gene3D" id="3.30.300.20">
    <property type="match status" value="1"/>
</dbReference>
<dbReference type="Gene3D" id="3.30.1140.32">
    <property type="entry name" value="Ribosomal protein S3, C-terminal domain"/>
    <property type="match status" value="1"/>
</dbReference>
<dbReference type="HAMAP" id="MF_01309_B">
    <property type="entry name" value="Ribosomal_uS3_B"/>
    <property type="match status" value="1"/>
</dbReference>
<dbReference type="InterPro" id="IPR004087">
    <property type="entry name" value="KH_dom"/>
</dbReference>
<dbReference type="InterPro" id="IPR015946">
    <property type="entry name" value="KH_dom-like_a/b"/>
</dbReference>
<dbReference type="InterPro" id="IPR004044">
    <property type="entry name" value="KH_dom_type_2"/>
</dbReference>
<dbReference type="InterPro" id="IPR009019">
    <property type="entry name" value="KH_sf_prok-type"/>
</dbReference>
<dbReference type="InterPro" id="IPR036419">
    <property type="entry name" value="Ribosomal_S3_C_sf"/>
</dbReference>
<dbReference type="InterPro" id="IPR005704">
    <property type="entry name" value="Ribosomal_uS3_bac-typ"/>
</dbReference>
<dbReference type="InterPro" id="IPR001351">
    <property type="entry name" value="Ribosomal_uS3_C"/>
</dbReference>
<dbReference type="InterPro" id="IPR018280">
    <property type="entry name" value="Ribosomal_uS3_CS"/>
</dbReference>
<dbReference type="NCBIfam" id="TIGR01009">
    <property type="entry name" value="rpsC_bact"/>
    <property type="match status" value="1"/>
</dbReference>
<dbReference type="PANTHER" id="PTHR11760">
    <property type="entry name" value="30S/40S RIBOSOMAL PROTEIN S3"/>
    <property type="match status" value="1"/>
</dbReference>
<dbReference type="PANTHER" id="PTHR11760:SF19">
    <property type="entry name" value="SMALL RIBOSOMAL SUBUNIT PROTEIN US3C"/>
    <property type="match status" value="1"/>
</dbReference>
<dbReference type="Pfam" id="PF07650">
    <property type="entry name" value="KH_2"/>
    <property type="match status" value="1"/>
</dbReference>
<dbReference type="Pfam" id="PF00189">
    <property type="entry name" value="Ribosomal_S3_C"/>
    <property type="match status" value="1"/>
</dbReference>
<dbReference type="SMART" id="SM00322">
    <property type="entry name" value="KH"/>
    <property type="match status" value="1"/>
</dbReference>
<dbReference type="SUPFAM" id="SSF54814">
    <property type="entry name" value="Prokaryotic type KH domain (KH-domain type II)"/>
    <property type="match status" value="1"/>
</dbReference>
<dbReference type="SUPFAM" id="SSF54821">
    <property type="entry name" value="Ribosomal protein S3 C-terminal domain"/>
    <property type="match status" value="1"/>
</dbReference>
<dbReference type="PROSITE" id="PS50823">
    <property type="entry name" value="KH_TYPE_2"/>
    <property type="match status" value="1"/>
</dbReference>
<dbReference type="PROSITE" id="PS00548">
    <property type="entry name" value="RIBOSOMAL_S3"/>
    <property type="match status" value="1"/>
</dbReference>
<accession>Q88QM9</accession>
<comment type="function">
    <text evidence="1">Binds the lower part of the 30S subunit head. Binds mRNA in the 70S ribosome, positioning it for translation.</text>
</comment>
<comment type="subunit">
    <text evidence="1">Part of the 30S ribosomal subunit. Forms a tight complex with proteins S10 and S14.</text>
</comment>
<comment type="similarity">
    <text evidence="1">Belongs to the universal ribosomal protein uS3 family.</text>
</comment>
<comment type="sequence caution" evidence="2">
    <conflict type="erroneous initiation">
        <sequence resource="EMBL-CDS" id="AAN66090"/>
    </conflict>
</comment>
<evidence type="ECO:0000255" key="1">
    <source>
        <dbReference type="HAMAP-Rule" id="MF_01309"/>
    </source>
</evidence>
<evidence type="ECO:0000305" key="2"/>
<organism>
    <name type="scientific">Pseudomonas putida (strain ATCC 47054 / DSM 6125 / CFBP 8728 / NCIMB 11950 / KT2440)</name>
    <dbReference type="NCBI Taxonomy" id="160488"/>
    <lineage>
        <taxon>Bacteria</taxon>
        <taxon>Pseudomonadati</taxon>
        <taxon>Pseudomonadota</taxon>
        <taxon>Gammaproteobacteria</taxon>
        <taxon>Pseudomonadales</taxon>
        <taxon>Pseudomonadaceae</taxon>
        <taxon>Pseudomonas</taxon>
    </lineage>
</organism>